<proteinExistence type="evidence at protein level"/>
<organism>
    <name type="scientific">Mus musculus</name>
    <name type="common">Mouse</name>
    <dbReference type="NCBI Taxonomy" id="10090"/>
    <lineage>
        <taxon>Eukaryota</taxon>
        <taxon>Metazoa</taxon>
        <taxon>Chordata</taxon>
        <taxon>Craniata</taxon>
        <taxon>Vertebrata</taxon>
        <taxon>Euteleostomi</taxon>
        <taxon>Mammalia</taxon>
        <taxon>Eutheria</taxon>
        <taxon>Euarchontoglires</taxon>
        <taxon>Glires</taxon>
        <taxon>Rodentia</taxon>
        <taxon>Myomorpha</taxon>
        <taxon>Muroidea</taxon>
        <taxon>Muridae</taxon>
        <taxon>Murinae</taxon>
        <taxon>Mus</taxon>
        <taxon>Mus</taxon>
    </lineage>
</organism>
<dbReference type="EC" id="3.4.22.61" evidence="4 16 19 21"/>
<dbReference type="EMBL" id="AF067841">
    <property type="protein sequence ID" value="AAC40132.1"/>
    <property type="molecule type" value="Genomic_DNA"/>
</dbReference>
<dbReference type="EMBL" id="AF067835">
    <property type="protein sequence ID" value="AAC40132.1"/>
    <property type="status" value="JOINED"/>
    <property type="molecule type" value="Genomic_DNA"/>
</dbReference>
<dbReference type="EMBL" id="AF067836">
    <property type="protein sequence ID" value="AAC40132.1"/>
    <property type="status" value="JOINED"/>
    <property type="molecule type" value="Genomic_DNA"/>
</dbReference>
<dbReference type="EMBL" id="AF067837">
    <property type="protein sequence ID" value="AAC40132.1"/>
    <property type="status" value="JOINED"/>
    <property type="molecule type" value="Genomic_DNA"/>
</dbReference>
<dbReference type="EMBL" id="AF067838">
    <property type="protein sequence ID" value="AAC40132.1"/>
    <property type="status" value="JOINED"/>
    <property type="molecule type" value="Genomic_DNA"/>
</dbReference>
<dbReference type="EMBL" id="AF067839">
    <property type="protein sequence ID" value="AAC40132.1"/>
    <property type="status" value="JOINED"/>
    <property type="molecule type" value="Genomic_DNA"/>
</dbReference>
<dbReference type="EMBL" id="AF067840">
    <property type="protein sequence ID" value="AAC40132.1"/>
    <property type="status" value="JOINED"/>
    <property type="molecule type" value="Genomic_DNA"/>
</dbReference>
<dbReference type="EMBL" id="AF067834">
    <property type="protein sequence ID" value="AAC40131.1"/>
    <property type="molecule type" value="mRNA"/>
</dbReference>
<dbReference type="EMBL" id="AJ007749">
    <property type="protein sequence ID" value="CAA07677.1"/>
    <property type="molecule type" value="mRNA"/>
</dbReference>
<dbReference type="EMBL" id="BC006737">
    <property type="protein sequence ID" value="AAH06737.1"/>
    <property type="molecule type" value="mRNA"/>
</dbReference>
<dbReference type="EMBL" id="BC049955">
    <property type="protein sequence ID" value="AAH49955.1"/>
    <property type="molecule type" value="mRNA"/>
</dbReference>
<dbReference type="EMBL" id="AJ000641">
    <property type="protein sequence ID" value="CAA04196.1"/>
    <property type="molecule type" value="mRNA"/>
</dbReference>
<dbReference type="CCDS" id="CCDS14979.1"/>
<dbReference type="CCDS" id="CCDS78590.1"/>
<dbReference type="RefSeq" id="NP_001073595.1">
    <property type="nucleotide sequence ID" value="NM_001080126.2"/>
</dbReference>
<dbReference type="RefSeq" id="NP_001264855.2">
    <property type="nucleotide sequence ID" value="NM_001277926.2"/>
</dbReference>
<dbReference type="RefSeq" id="NP_001406970.1">
    <property type="nucleotide sequence ID" value="NM_001420041.1"/>
</dbReference>
<dbReference type="RefSeq" id="NP_001406971.1">
    <property type="nucleotide sequence ID" value="NM_001420042.1"/>
</dbReference>
<dbReference type="RefSeq" id="NP_001406972.1">
    <property type="nucleotide sequence ID" value="NM_001420043.1"/>
</dbReference>
<dbReference type="RefSeq" id="NP_033942.1">
    <property type="nucleotide sequence ID" value="NM_009812.3"/>
</dbReference>
<dbReference type="SMR" id="O89110"/>
<dbReference type="BioGRID" id="198500">
    <property type="interactions" value="23"/>
</dbReference>
<dbReference type="ComplexPortal" id="CPX-1914">
    <property type="entry name" value="Ripoptosome"/>
</dbReference>
<dbReference type="ComplexPortal" id="CPX-3663">
    <property type="entry name" value="Caspase-8 complex"/>
</dbReference>
<dbReference type="CORUM" id="O89110"/>
<dbReference type="DIP" id="DIP-37435N"/>
<dbReference type="FunCoup" id="O89110">
    <property type="interactions" value="1069"/>
</dbReference>
<dbReference type="IntAct" id="O89110">
    <property type="interactions" value="8"/>
</dbReference>
<dbReference type="MINT" id="O89110"/>
<dbReference type="STRING" id="10090.ENSMUSP00000140546"/>
<dbReference type="ChEMBL" id="CHEMBL4630806"/>
<dbReference type="MEROPS" id="C14.009"/>
<dbReference type="GlyGen" id="O89110">
    <property type="glycosylation" value="1 site, 1 O-linked glycan (1 site)"/>
</dbReference>
<dbReference type="iPTMnet" id="O89110"/>
<dbReference type="PhosphoSitePlus" id="O89110"/>
<dbReference type="jPOST" id="O89110"/>
<dbReference type="PaxDb" id="10090-ENSMUSP00000027189"/>
<dbReference type="PeptideAtlas" id="O89110"/>
<dbReference type="ProteomicsDB" id="279914"/>
<dbReference type="Pumba" id="O89110"/>
<dbReference type="Antibodypedia" id="697">
    <property type="antibodies" value="1501 antibodies from 53 providers"/>
</dbReference>
<dbReference type="DNASU" id="12370"/>
<dbReference type="Ensembl" id="ENSMUST00000027189.15">
    <property type="protein sequence ID" value="ENSMUSP00000027189.9"/>
    <property type="gene ID" value="ENSMUSG00000026029.15"/>
</dbReference>
<dbReference type="Ensembl" id="ENSMUST00000165549.8">
    <property type="protein sequence ID" value="ENSMUSP00000127375.2"/>
    <property type="gene ID" value="ENSMUSG00000026029.15"/>
</dbReference>
<dbReference type="GeneID" id="12370"/>
<dbReference type="KEGG" id="mmu:12370"/>
<dbReference type="UCSC" id="uc007bcs.1">
    <property type="organism name" value="mouse"/>
</dbReference>
<dbReference type="AGR" id="MGI:1261423"/>
<dbReference type="CTD" id="841"/>
<dbReference type="MGI" id="MGI:1261423">
    <property type="gene designation" value="Casp8"/>
</dbReference>
<dbReference type="VEuPathDB" id="HostDB:ENSMUSG00000026029"/>
<dbReference type="eggNOG" id="KOG3573">
    <property type="taxonomic scope" value="Eukaryota"/>
</dbReference>
<dbReference type="GeneTree" id="ENSGT00940000160319"/>
<dbReference type="HOGENOM" id="CLU_036904_4_2_1"/>
<dbReference type="InParanoid" id="O89110"/>
<dbReference type="OMA" id="WNRIEDG"/>
<dbReference type="OrthoDB" id="6114029at2759"/>
<dbReference type="PhylomeDB" id="O89110"/>
<dbReference type="TreeFam" id="TF102023"/>
<dbReference type="BRENDA" id="3.4.22.61">
    <property type="organism ID" value="3474"/>
</dbReference>
<dbReference type="Reactome" id="R-MMU-111465">
    <property type="pathway name" value="Apoptotic cleavage of cellular proteins"/>
</dbReference>
<dbReference type="Reactome" id="R-MMU-140534">
    <property type="pathway name" value="Caspase activation via Death Receptors in the presence of ligand"/>
</dbReference>
<dbReference type="Reactome" id="R-MMU-168638">
    <property type="pathway name" value="NOD1/2 Signaling Pathway"/>
</dbReference>
<dbReference type="Reactome" id="R-MMU-2562578">
    <property type="pathway name" value="TRIF-mediated programmed cell death"/>
</dbReference>
<dbReference type="Reactome" id="R-MMU-264870">
    <property type="pathway name" value="Caspase-mediated cleavage of cytoskeletal proteins"/>
</dbReference>
<dbReference type="Reactome" id="R-MMU-3371378">
    <property type="pathway name" value="Regulation by c-FLIP"/>
</dbReference>
<dbReference type="Reactome" id="R-MMU-5218900">
    <property type="pathway name" value="CASP8 activity is inhibited"/>
</dbReference>
<dbReference type="Reactome" id="R-MMU-5357905">
    <property type="pathway name" value="Regulation of TNFR1 signaling"/>
</dbReference>
<dbReference type="Reactome" id="R-MMU-5660668">
    <property type="pathway name" value="CLEC7A/inflammasome pathway"/>
</dbReference>
<dbReference type="Reactome" id="R-MMU-5675482">
    <property type="pathway name" value="Regulation of necroptotic cell death"/>
</dbReference>
<dbReference type="Reactome" id="R-MMU-69416">
    <property type="pathway name" value="Dimerization of procaspase-8"/>
</dbReference>
<dbReference type="Reactome" id="R-MMU-75108">
    <property type="pathway name" value="Activation, myristolyation of BID and translocation to mitochondria"/>
</dbReference>
<dbReference type="Reactome" id="R-MMU-75153">
    <property type="pathway name" value="Apoptotic execution phase"/>
</dbReference>
<dbReference type="Reactome" id="R-MMU-75157">
    <property type="pathway name" value="FasL/ CD95L signaling"/>
</dbReference>
<dbReference type="Reactome" id="R-MMU-75158">
    <property type="pathway name" value="TRAIL signaling"/>
</dbReference>
<dbReference type="Reactome" id="R-MMU-9758274">
    <property type="pathway name" value="Regulation of NF-kappa B signaling"/>
</dbReference>
<dbReference type="BioGRID-ORCS" id="12370">
    <property type="hits" value="19 hits in 83 CRISPR screens"/>
</dbReference>
<dbReference type="ChiTaRS" id="Casp8">
    <property type="organism name" value="mouse"/>
</dbReference>
<dbReference type="PRO" id="PR:O89110"/>
<dbReference type="Proteomes" id="UP000000589">
    <property type="component" value="Chromosome 1"/>
</dbReference>
<dbReference type="RNAct" id="O89110">
    <property type="molecule type" value="protein"/>
</dbReference>
<dbReference type="Bgee" id="ENSMUSG00000026029">
    <property type="expression patterns" value="Expressed in small intestine Peyer's patch and 232 other cell types or tissues"/>
</dbReference>
<dbReference type="ExpressionAtlas" id="O89110">
    <property type="expression patterns" value="baseline and differential"/>
</dbReference>
<dbReference type="GO" id="GO:0005737">
    <property type="term" value="C:cytoplasm"/>
    <property type="evidence" value="ECO:0000314"/>
    <property type="project" value="ParkinsonsUK-UCL"/>
</dbReference>
<dbReference type="GO" id="GO:0005739">
    <property type="term" value="C:mitochondrion"/>
    <property type="evidence" value="ECO:0007005"/>
    <property type="project" value="MGI"/>
</dbReference>
<dbReference type="GO" id="GO:0030690">
    <property type="term" value="C:Noc1p-Noc2p complex"/>
    <property type="evidence" value="ECO:0000315"/>
    <property type="project" value="MGI"/>
</dbReference>
<dbReference type="GO" id="GO:0005634">
    <property type="term" value="C:nucleus"/>
    <property type="evidence" value="ECO:0000314"/>
    <property type="project" value="MGI"/>
</dbReference>
<dbReference type="GO" id="GO:0005886">
    <property type="term" value="C:plasma membrane"/>
    <property type="evidence" value="ECO:0000314"/>
    <property type="project" value="ParkinsonsUK-UCL"/>
</dbReference>
<dbReference type="GO" id="GO:0097342">
    <property type="term" value="C:ripoptosome"/>
    <property type="evidence" value="ECO:0000250"/>
    <property type="project" value="UniProtKB"/>
</dbReference>
<dbReference type="GO" id="GO:0008656">
    <property type="term" value="F:cysteine-type endopeptidase activator activity involved in apoptotic process"/>
    <property type="evidence" value="ECO:0000314"/>
    <property type="project" value="MGI"/>
</dbReference>
<dbReference type="GO" id="GO:0004197">
    <property type="term" value="F:cysteine-type endopeptidase activity"/>
    <property type="evidence" value="ECO:0000314"/>
    <property type="project" value="UniProtKB"/>
</dbReference>
<dbReference type="GO" id="GO:0004175">
    <property type="term" value="F:endopeptidase activity"/>
    <property type="evidence" value="ECO:0000314"/>
    <property type="project" value="UniProtKB"/>
</dbReference>
<dbReference type="GO" id="GO:0008233">
    <property type="term" value="F:peptidase activity"/>
    <property type="evidence" value="ECO:0000314"/>
    <property type="project" value="MGI"/>
</dbReference>
<dbReference type="GO" id="GO:0001525">
    <property type="term" value="P:angiogenesis"/>
    <property type="evidence" value="ECO:0000315"/>
    <property type="project" value="UniProtKB"/>
</dbReference>
<dbReference type="GO" id="GO:0006915">
    <property type="term" value="P:apoptotic process"/>
    <property type="evidence" value="ECO:0000314"/>
    <property type="project" value="MGI"/>
</dbReference>
<dbReference type="GO" id="GO:0097190">
    <property type="term" value="P:apoptotic signaling pathway"/>
    <property type="evidence" value="ECO:0000314"/>
    <property type="project" value="MGI"/>
</dbReference>
<dbReference type="GO" id="GO:0048738">
    <property type="term" value="P:cardiac muscle tissue development"/>
    <property type="evidence" value="ECO:0000304"/>
    <property type="project" value="UniProtKB"/>
</dbReference>
<dbReference type="GO" id="GO:0097194">
    <property type="term" value="P:execution phase of apoptosis"/>
    <property type="evidence" value="ECO:0000315"/>
    <property type="project" value="UniProtKB"/>
</dbReference>
<dbReference type="GO" id="GO:0097191">
    <property type="term" value="P:extrinsic apoptotic signaling pathway"/>
    <property type="evidence" value="ECO:0000314"/>
    <property type="project" value="MGI"/>
</dbReference>
<dbReference type="GO" id="GO:0008625">
    <property type="term" value="P:extrinsic apoptotic signaling pathway via death domain receptors"/>
    <property type="evidence" value="ECO:0000315"/>
    <property type="project" value="MGI"/>
</dbReference>
<dbReference type="GO" id="GO:0007507">
    <property type="term" value="P:heart development"/>
    <property type="evidence" value="ECO:0000315"/>
    <property type="project" value="UniProtKB"/>
</dbReference>
<dbReference type="GO" id="GO:0097284">
    <property type="term" value="P:hepatocyte apoptotic process"/>
    <property type="evidence" value="ECO:0000315"/>
    <property type="project" value="MGI"/>
</dbReference>
<dbReference type="GO" id="GO:0030225">
    <property type="term" value="P:macrophage differentiation"/>
    <property type="evidence" value="ECO:0000315"/>
    <property type="project" value="MGI"/>
</dbReference>
<dbReference type="GO" id="GO:0070266">
    <property type="term" value="P:necroptotic process"/>
    <property type="evidence" value="ECO:0000316"/>
    <property type="project" value="MGI"/>
</dbReference>
<dbReference type="GO" id="GO:0060546">
    <property type="term" value="P:negative regulation of necroptotic process"/>
    <property type="evidence" value="ECO:0000315"/>
    <property type="project" value="UniProtKB"/>
</dbReference>
<dbReference type="GO" id="GO:0001841">
    <property type="term" value="P:neural tube formation"/>
    <property type="evidence" value="ECO:0000315"/>
    <property type="project" value="MGI"/>
</dbReference>
<dbReference type="GO" id="GO:0043065">
    <property type="term" value="P:positive regulation of apoptotic process"/>
    <property type="evidence" value="ECO:0000314"/>
    <property type="project" value="MGI"/>
</dbReference>
<dbReference type="GO" id="GO:1900119">
    <property type="term" value="P:positive regulation of execution phase of apoptosis"/>
    <property type="evidence" value="ECO:0000314"/>
    <property type="project" value="MGI"/>
</dbReference>
<dbReference type="GO" id="GO:2001238">
    <property type="term" value="P:positive regulation of extrinsic apoptotic signaling pathway"/>
    <property type="evidence" value="ECO:0000316"/>
    <property type="project" value="MGI"/>
</dbReference>
<dbReference type="GO" id="GO:0016485">
    <property type="term" value="P:protein processing"/>
    <property type="evidence" value="ECO:0000314"/>
    <property type="project" value="UniProtKB"/>
</dbReference>
<dbReference type="GO" id="GO:0051603">
    <property type="term" value="P:proteolysis involved in protein catabolic process"/>
    <property type="evidence" value="ECO:0000314"/>
    <property type="project" value="UniProtKB"/>
</dbReference>
<dbReference type="GO" id="GO:0070269">
    <property type="term" value="P:pyroptotic inflammatory response"/>
    <property type="evidence" value="ECO:0000314"/>
    <property type="project" value="UniProtKB"/>
</dbReference>
<dbReference type="GO" id="GO:2001233">
    <property type="term" value="P:regulation of apoptotic signaling pathway"/>
    <property type="evidence" value="ECO:0000316"/>
    <property type="project" value="MGI"/>
</dbReference>
<dbReference type="GO" id="GO:0001817">
    <property type="term" value="P:regulation of cytokine production"/>
    <property type="evidence" value="ECO:0000314"/>
    <property type="project" value="UniProtKB"/>
</dbReference>
<dbReference type="GO" id="GO:0045088">
    <property type="term" value="P:regulation of innate immune response"/>
    <property type="evidence" value="ECO:0000314"/>
    <property type="project" value="UniProtKB"/>
</dbReference>
<dbReference type="GO" id="GO:0070243">
    <property type="term" value="P:regulation of thymocyte apoptotic process"/>
    <property type="evidence" value="ECO:0000316"/>
    <property type="project" value="MGI"/>
</dbReference>
<dbReference type="GO" id="GO:0097264">
    <property type="term" value="P:self proteolysis"/>
    <property type="evidence" value="ECO:0000315"/>
    <property type="project" value="UniProtKB"/>
</dbReference>
<dbReference type="CDD" id="cd00032">
    <property type="entry name" value="CASc"/>
    <property type="match status" value="1"/>
</dbReference>
<dbReference type="CDD" id="cd08333">
    <property type="entry name" value="DED_Caspase_8_r1"/>
    <property type="match status" value="1"/>
</dbReference>
<dbReference type="FunFam" id="1.10.533.10:FF:000021">
    <property type="entry name" value="caspase-8 isoform X1"/>
    <property type="match status" value="1"/>
</dbReference>
<dbReference type="FunFam" id="3.40.50.1460:FF:000008">
    <property type="entry name" value="caspase-8 isoform X1"/>
    <property type="match status" value="1"/>
</dbReference>
<dbReference type="Gene3D" id="3.40.50.1460">
    <property type="match status" value="1"/>
</dbReference>
<dbReference type="Gene3D" id="1.10.533.10">
    <property type="entry name" value="Death Domain, Fas"/>
    <property type="match status" value="2"/>
</dbReference>
<dbReference type="InterPro" id="IPR033170">
    <property type="entry name" value="Caspase-8_DED1"/>
</dbReference>
<dbReference type="InterPro" id="IPR029030">
    <property type="entry name" value="Caspase-like_dom_sf"/>
</dbReference>
<dbReference type="InterPro" id="IPR033139">
    <property type="entry name" value="Caspase_cys_AS"/>
</dbReference>
<dbReference type="InterPro" id="IPR016129">
    <property type="entry name" value="Caspase_his_AS"/>
</dbReference>
<dbReference type="InterPro" id="IPR011029">
    <property type="entry name" value="DEATH-like_dom_sf"/>
</dbReference>
<dbReference type="InterPro" id="IPR001875">
    <property type="entry name" value="DED_dom"/>
</dbReference>
<dbReference type="InterPro" id="IPR011600">
    <property type="entry name" value="Pept_C14_caspase"/>
</dbReference>
<dbReference type="InterPro" id="IPR002138">
    <property type="entry name" value="Pept_C14_p10"/>
</dbReference>
<dbReference type="InterPro" id="IPR001309">
    <property type="entry name" value="Pept_C14_p20"/>
</dbReference>
<dbReference type="InterPro" id="IPR015917">
    <property type="entry name" value="Pept_C14A"/>
</dbReference>
<dbReference type="PANTHER" id="PTHR48169:SF7">
    <property type="entry name" value="CASPASE 10"/>
    <property type="match status" value="1"/>
</dbReference>
<dbReference type="PANTHER" id="PTHR48169">
    <property type="entry name" value="DED DOMAIN-CONTAINING PROTEIN"/>
    <property type="match status" value="1"/>
</dbReference>
<dbReference type="Pfam" id="PF01335">
    <property type="entry name" value="DED"/>
    <property type="match status" value="2"/>
</dbReference>
<dbReference type="Pfam" id="PF00656">
    <property type="entry name" value="Peptidase_C14"/>
    <property type="match status" value="1"/>
</dbReference>
<dbReference type="PRINTS" id="PR00376">
    <property type="entry name" value="IL1BCENZYME"/>
</dbReference>
<dbReference type="SMART" id="SM00115">
    <property type="entry name" value="CASc"/>
    <property type="match status" value="1"/>
</dbReference>
<dbReference type="SMART" id="SM00031">
    <property type="entry name" value="DED"/>
    <property type="match status" value="2"/>
</dbReference>
<dbReference type="SUPFAM" id="SSF52129">
    <property type="entry name" value="Caspase-like"/>
    <property type="match status" value="1"/>
</dbReference>
<dbReference type="SUPFAM" id="SSF47986">
    <property type="entry name" value="DEATH domain"/>
    <property type="match status" value="2"/>
</dbReference>
<dbReference type="PROSITE" id="PS01122">
    <property type="entry name" value="CASPASE_CYS"/>
    <property type="match status" value="1"/>
</dbReference>
<dbReference type="PROSITE" id="PS01121">
    <property type="entry name" value="CASPASE_HIS"/>
    <property type="match status" value="1"/>
</dbReference>
<dbReference type="PROSITE" id="PS50207">
    <property type="entry name" value="CASPASE_P10"/>
    <property type="match status" value="1"/>
</dbReference>
<dbReference type="PROSITE" id="PS50208">
    <property type="entry name" value="CASPASE_P20"/>
    <property type="match status" value="1"/>
</dbReference>
<dbReference type="PROSITE" id="PS50168">
    <property type="entry name" value="DED"/>
    <property type="match status" value="2"/>
</dbReference>
<gene>
    <name evidence="22 23 27" type="primary">Casp8</name>
</gene>
<protein>
    <recommendedName>
        <fullName evidence="22 23">Caspase-8</fullName>
        <shortName evidence="22 23">CASP-8</shortName>
        <ecNumber evidence="4 16 19 21">3.4.22.61</ecNumber>
    </recommendedName>
    <component>
        <recommendedName>
            <fullName evidence="23">Caspase-8 subunit p18</fullName>
        </recommendedName>
    </component>
    <component>
        <recommendedName>
            <fullName evidence="23">Caspase-8 subunit p10</fullName>
        </recommendedName>
    </component>
</protein>
<evidence type="ECO:0000250" key="1">
    <source>
        <dbReference type="UniProtKB" id="Q14790"/>
    </source>
</evidence>
<evidence type="ECO:0000250" key="2">
    <source>
        <dbReference type="UniProtKB" id="Q9JHX4"/>
    </source>
</evidence>
<evidence type="ECO:0000255" key="3">
    <source>
        <dbReference type="PROSITE-ProRule" id="PRU00065"/>
    </source>
</evidence>
<evidence type="ECO:0000269" key="4">
    <source>
    </source>
</evidence>
<evidence type="ECO:0000269" key="5">
    <source>
    </source>
</evidence>
<evidence type="ECO:0000269" key="6">
    <source>
    </source>
</evidence>
<evidence type="ECO:0000269" key="7">
    <source>
    </source>
</evidence>
<evidence type="ECO:0000269" key="8">
    <source>
    </source>
</evidence>
<evidence type="ECO:0000269" key="9">
    <source>
    </source>
</evidence>
<evidence type="ECO:0000269" key="10">
    <source>
    </source>
</evidence>
<evidence type="ECO:0000269" key="11">
    <source>
    </source>
</evidence>
<evidence type="ECO:0000269" key="12">
    <source>
    </source>
</evidence>
<evidence type="ECO:0000269" key="13">
    <source>
    </source>
</evidence>
<evidence type="ECO:0000269" key="14">
    <source>
    </source>
</evidence>
<evidence type="ECO:0000269" key="15">
    <source>
    </source>
</evidence>
<evidence type="ECO:0000269" key="16">
    <source>
    </source>
</evidence>
<evidence type="ECO:0000269" key="17">
    <source>
    </source>
</evidence>
<evidence type="ECO:0000269" key="18">
    <source>
    </source>
</evidence>
<evidence type="ECO:0000269" key="19">
    <source>
    </source>
</evidence>
<evidence type="ECO:0000269" key="20">
    <source>
    </source>
</evidence>
<evidence type="ECO:0000269" key="21">
    <source>
    </source>
</evidence>
<evidence type="ECO:0000303" key="22">
    <source>
    </source>
</evidence>
<evidence type="ECO:0000303" key="23">
    <source>
    </source>
</evidence>
<evidence type="ECO:0000305" key="24"/>
<evidence type="ECO:0000305" key="25">
    <source>
    </source>
</evidence>
<evidence type="ECO:0000305" key="26">
    <source>
    </source>
</evidence>
<evidence type="ECO:0000312" key="27">
    <source>
        <dbReference type="MGI" id="MGI:1261423"/>
    </source>
</evidence>
<evidence type="ECO:0007744" key="28">
    <source>
    </source>
</evidence>
<evidence type="ECO:0007744" key="29">
    <source>
    </source>
</evidence>
<evidence type="ECO:0007744" key="30">
    <source>
    </source>
</evidence>
<evidence type="ECO:0007744" key="31">
    <source>
    </source>
</evidence>
<keyword id="KW-0007">Acetylation</keyword>
<keyword id="KW-0053">Apoptosis</keyword>
<keyword id="KW-0963">Cytoplasm</keyword>
<keyword id="KW-0378">Hydrolase</keyword>
<keyword id="KW-0539">Nucleus</keyword>
<keyword id="KW-0597">Phosphoprotein</keyword>
<keyword id="KW-0645">Protease</keyword>
<keyword id="KW-1185">Reference proteome</keyword>
<keyword id="KW-0677">Repeat</keyword>
<keyword id="KW-0788">Thiol protease</keyword>
<keyword id="KW-0865">Zymogen</keyword>
<comment type="function">
    <text evidence="1 4 7 8 9 10 11 12 13 15 16 17 19 21">Thiol protease that plays a key role in programmed cell death by acting as a molecular switch for apoptosis, necroptosis and pyroptosis, and is required to prevent tissue damage during embryonic development and adulthood (PubMed:12065591, PubMed:18455983, PubMed:30361383, PubMed:30381458, PubMed:31511692, PubMed:31748744, PubMed:33397971). Initiator protease that induces extrinsic apoptosis by mediating cleavage and activation of effector caspases responsible for FAS/CD95-mediated and TNFRSF1A-induced cell death (PubMed:24813849, PubMed:24813850, PubMed:9654089, PubMed:9837723). Cleaves and activates effector caspases CASP3, CASP4, CASP6, CASP7, CASP9 and CASP10 (By similarity). Binding to the adapter molecule FADD recruits it to either receptor FAS/CD95 or TNFRSF1A (PubMed:29440439). The resulting aggregate called the death-inducing signaling complex (DISC) performs CASP8 proteolytic activation (By similarity). The active dimeric enzyme is then liberated from the DISC and free to activate downstream apoptotic proteases (By similarity). Proteolytic fragments of the N-terminal propeptide (termed CAP3, CAP5 and CAP6) are likely retained in the DISC (By similarity). In addition to extrinsic apoptosis, also acts as a negative regulator of necroptosis: acts by cleaving RIPK1 at 'Asp-325', which is crucial to inhibit RIPK1 kinase activity, limiting TNF-induced apoptosis, necroptosis and inflammatory response (PubMed:31511692). Also able to initiate pyroptosis by mediating cleavage and activation of gasdermin-C and -D (GSDMC and GSDMD, respectively): gasdermin cleavage promotes release of the N-terminal moiety that binds to membranes and forms pores, triggering pyroptosis (PubMed:30361383, PubMed:30381458). Initiates pyroptosis following inactivation of MAP3K7/TAK1 (PubMed:30361383, PubMed:30381458). Also acts as a regulator of innate immunity by mediating cleavage and inactivation of N4BP1 downstream of TLR3 or TLR4, thereby promoting cytokine production (PubMed:32971525). May participate in the Granzyme B (GZMB) cell death pathways (By similarity). Cleaves PARP1 and PARP2 (PubMed:12065591).</text>
</comment>
<comment type="catalytic activity">
    <reaction evidence="4 16 19 21">
        <text>Strict requirement for Asp at position P1 and has a preferred cleavage sequence of (Leu/Asp/Val)-Glu-Thr-Asp-|-(Gly/Ser/Ala).</text>
        <dbReference type="EC" id="3.4.22.61"/>
    </reaction>
</comment>
<comment type="activity regulation">
    <text evidence="8 9">CASP8 activity is restricted by RIPK1.</text>
</comment>
<comment type="activity regulation">
    <text evidence="21">(Microbial infection) Inhibited by baculovirus p35 protein P35.</text>
</comment>
<comment type="subunit">
    <text evidence="1 2 5 6 7 10 14 18">Heterotetramer that consists of two anti-parallel arranged heterodimers, each one formed by a 18 kDa (p18) and a 10 kDa (p10) subunit (By similarity). Component of the death-induced signaling complex (DISC) composed of cell surface receptor FAS/CD95 or TNFRSF1A, adapter protein FADD and the CASP8 protease; recruitment of CASP8 to the complex is required for processing of CASP8 into the p18 and p10 subunits (By similarity). Component of the AIM2 PANoptosome complex, a multiprotein complex that drives inflammatory cell death (PANoptosis) (PubMed:34471287). Interacts with CFLAR and PEA15 (By similarity). Interacts with RFFL and RNF34; negatively regulate CASP8 through proteasomal degradation (By similarity). Interacts with TNFAIP8L2 (PubMed:18455983). Interacts with CASP8AP2 (PubMed:17245429). Interacts with NOL3; decreases CASP8 activity in a mitochondria localization- and phosphorylation-dependent manner and this interaction is dissociated by calcium (PubMed:15383280). Interacts with UBR2 (By similarity). Interacts with RIPK1 (PubMed:31519887). Interacts with stimulated TNFRSF10B; this interaction is followed by CASP8 proteolytic cleavage and activation (By similarity).</text>
</comment>
<comment type="interaction">
    <interactant intactId="EBI-851690">
        <id>O89110</id>
    </interactant>
    <interactant intactId="EBI-1776062">
        <id>P19091</id>
        <label>Ar</label>
    </interactant>
    <organismsDiffer>false</organismsDiffer>
    <experiments>2</experiments>
</comment>
<comment type="interaction">
    <interactant intactId="EBI-851690">
        <id>O89110</id>
    </interactant>
    <interactant intactId="EBI-524415">
        <id>Q61160</id>
        <label>Fadd</label>
    </interactant>
    <organismsDiffer>false</organismsDiffer>
    <experiments>6</experiments>
</comment>
<comment type="interaction">
    <interactant intactId="EBI-851690">
        <id>O89110</id>
    </interactant>
    <interactant intactId="EBI-296206">
        <id>P25446</id>
        <label>Fas</label>
    </interactant>
    <organismsDiffer>false</organismsDiffer>
    <experiments>3</experiments>
</comment>
<comment type="interaction">
    <interactant intactId="EBI-851690">
        <id>O89110</id>
    </interactant>
    <interactant intactId="EBI-1781612">
        <id>Q9D8Y7</id>
        <label>Tnfaip8l2</label>
    </interactant>
    <organismsDiffer>false</organismsDiffer>
    <experiments>2</experiments>
</comment>
<comment type="interaction">
    <interactant intactId="EBI-851690">
        <id>O89110</id>
    </interactant>
    <interactant intactId="EBI-359977">
        <id>P01375</id>
        <label>TNF</label>
    </interactant>
    <organismsDiffer>true</organismsDiffer>
    <experiments>2</experiments>
</comment>
<comment type="subcellular location">
    <subcellularLocation>
        <location evidence="4">Cytoplasm</location>
    </subcellularLocation>
    <subcellularLocation>
        <location evidence="4">Nucleus</location>
    </subcellularLocation>
    <text evidence="4">Translocates into the nucleus during apoptosis.</text>
</comment>
<comment type="tissue specificity">
    <text evidence="19 21">Expressed in a wide variety of tissues. Highest expression in spleen, thymus, lung, liver and kidney. Lower expression in heart, brain, testis and skeletal muscle.</text>
</comment>
<comment type="developmental stage">
    <text evidence="19 21">In the embryo, highest expression occurs at day 7.</text>
</comment>
<comment type="PTM">
    <text evidence="1 13">Generation of the subunits requires association with the death-inducing signaling complex (DISC), whereas additional processing is likely due to the autocatalytic activity of the activated protease (PubMed:31511692). GZMB and CASP10 can be involved in these processing events (By similarity).</text>
</comment>
<comment type="PTM">
    <text evidence="21">(Microbial infection) Proteolytically cleaved by the cowpox virus CRMA death inhibitory protein.</text>
</comment>
<comment type="PTM">
    <text evidence="1">Phosphorylation on Ser-389 during mitosis by CDK1 inhibits activation by proteolysis and prevents apoptosis. This phosphorylation occurs in cancer cell lines, as well as in primary breast tissues and lymphocytes (By similarity).</text>
</comment>
<comment type="disruption phenotype">
    <text evidence="8 9 20">Embryonic lethality at lethality at 10.5 dpc (PubMed:9729047). Embryos display impaired heart muscle development and congested accumulation of erythrocytes (PubMed:9729047). Perinatal lethality observed in Ripk1 knockout mice is rescued in knockout mice lacking both Ripk1 and Casp8; mice however die the first days of postnatal life (PubMed:24813849). Only mice lacking Ripk1, Ripk3 and Casp8 survive past weaning and rescue lethality caused by the absence of Ripk1 (PubMed:24813849, PubMed:24813850).</text>
</comment>
<comment type="similarity">
    <text evidence="24">Belongs to the peptidase C14A family.</text>
</comment>
<feature type="propeptide" id="PRO_0000004632" evidence="13">
    <location>
        <begin position="1"/>
        <end position="218"/>
    </location>
</feature>
<feature type="chain" id="PRO_0000004633" description="Caspase-8 subunit p18" evidence="25">
    <location>
        <begin position="219"/>
        <end position="376"/>
    </location>
</feature>
<feature type="propeptide" id="PRO_0000004634" evidence="13">
    <location>
        <begin position="377"/>
        <end position="387"/>
    </location>
</feature>
<feature type="chain" id="PRO_0000004635" description="Caspase-8 subunit p10" evidence="25">
    <location>
        <begin position="388"/>
        <end position="480"/>
    </location>
</feature>
<feature type="domain" description="DED 1" evidence="3">
    <location>
        <begin position="3"/>
        <end position="80"/>
    </location>
</feature>
<feature type="domain" description="DED 2" evidence="3">
    <location>
        <begin position="101"/>
        <end position="177"/>
    </location>
</feature>
<feature type="active site" evidence="1">
    <location>
        <position position="319"/>
    </location>
</feature>
<feature type="active site" evidence="25 26">
    <location>
        <position position="362"/>
    </location>
</feature>
<feature type="site" description="Cleavage; by autocatalytic cleavage" evidence="13">
    <location>
        <begin position="218"/>
        <end position="219"/>
    </location>
</feature>
<feature type="site" description="Cleavage; by CASP6" evidence="1">
    <location>
        <begin position="374"/>
        <end position="375"/>
    </location>
</feature>
<feature type="site" description="Cleavage; by autocatalytic cleavage" evidence="13">
    <location>
        <begin position="387"/>
        <end position="388"/>
    </location>
</feature>
<feature type="modified residue" description="Phosphoserine" evidence="28 29 30">
    <location>
        <position position="188"/>
    </location>
</feature>
<feature type="modified residue" description="Phosphoserine" evidence="28 30">
    <location>
        <position position="213"/>
    </location>
</feature>
<feature type="modified residue" description="N6-acetyllysine" evidence="31">
    <location>
        <position position="226"/>
    </location>
</feature>
<feature type="modified residue" description="Phosphotyrosine" evidence="1">
    <location>
        <position position="336"/>
    </location>
</feature>
<feature type="modified residue" description="Phosphoserine; by CDK1" evidence="1">
    <location>
        <position position="389"/>
    </location>
</feature>
<feature type="mutagenesis site" description="Loss of autocatalytic cleavage; when associated with A-218; A-225 and A-387." evidence="13">
    <original>D</original>
    <variation>A</variation>
    <location>
        <position position="212"/>
    </location>
</feature>
<feature type="mutagenesis site" description="Loss of autocatalytic cleavage; when associated with A-212; A-225 and A-387." evidence="13">
    <original>D</original>
    <variation>A</variation>
    <location>
        <position position="218"/>
    </location>
</feature>
<feature type="mutagenesis site" description="Loss of autocatalytic cleavage; when associated with A-212; A-218 and A-387." evidence="13">
    <original>D</original>
    <variation>A</variation>
    <location>
        <position position="225"/>
    </location>
</feature>
<feature type="mutagenesis site" description="Loss of kinase ativity. Knockin mice show embryonic lethality caused by endothelial cell necroptosis leading to cardiovascular defects. Mlkl deficiency rescues the cardiovascular phenotype of knockin mice, but causes perinatal lethality caused by induction of pyroptosis." evidence="13 15">
    <original>C</original>
    <variation>A</variation>
    <location>
        <position position="362"/>
    </location>
</feature>
<feature type="mutagenesis site" description="Loss of autocatalytic cleavage; when associated with A-212; A-218 and A-225." evidence="13">
    <original>D</original>
    <variation>A</variation>
    <location>
        <position position="387"/>
    </location>
</feature>
<feature type="sequence conflict" description="In Ref. 4; CAA04196." evidence="24" ref="4">
    <original>HISR</original>
    <variation>PHPVG</variation>
    <location>
        <begin position="68"/>
        <end position="71"/>
    </location>
</feature>
<feature type="sequence conflict" description="In Ref. 4; CAA04196." evidence="24" ref="4">
    <original>DNAQIS</original>
    <variation>RQCPRFL</variation>
    <location>
        <begin position="94"/>
        <end position="99"/>
    </location>
</feature>
<feature type="sequence conflict" description="In Ref. 2; CAA07677." evidence="24" ref="2">
    <original>A</original>
    <variation>V</variation>
    <location>
        <position position="96"/>
    </location>
</feature>
<feature type="sequence conflict" description="In Ref. 4; CAA04196." evidence="24" ref="4">
    <original>VMLFK</original>
    <variation>SCSFR</variation>
    <location>
        <begin position="103"/>
        <end position="107"/>
    </location>
</feature>
<feature type="sequence conflict" description="In Ref. 4; CAA04196." evidence="24" ref="4">
    <original>K</original>
    <variation>N</variation>
    <location>
        <position position="475"/>
    </location>
</feature>
<name>CASP8_MOUSE</name>
<sequence>MDFQSCLYAIAEELGSEDLAALKFLCLDYIPHKKQETIEDAQKLFLRLREKGMLEEGNLSFLKELLFHISRWDLLVNFLDCNREEMVRELRDPDNAQISPYRVMLFKLSEEVSELELRSFKFLLNNEIPKCKLEDDLSLLEIFVEMEKRTMLAENNLETLKSICDQVNKSLLGKIEDYERSSTERRMSLEGREELPPSVLDEMSLKMAELCDSPREQDSESRTSDKVYQMKNKPRGYCLIINNHDFSKAREDITQLRKMKDRKGTDCDKEALSKTFKELHFEIVSYDDCTANEIHEILEGYQSADHKNKDCFICCILSHGDKGVVYGTDGKEASIYDLTSYFTGSKCPSLSGKPKIFFIQACQGSNFQKGVPDEAGFEQQNHTLEVDSSSHKNYIPDEADFLLGMATVKNCVSYRDPVNGTWYIQSLCQSLRERCPQGDDILSILTGVNYDVSNKDDRRNKGKQMPQPTFTLRKKLFFPP</sequence>
<reference key="1">
    <citation type="journal article" date="1998" name="Eur. J. Biochem.">
        <title>Molecular cloning and characterization of mouse caspase-8.</title>
        <authorList>
            <person name="Sakamaki K."/>
            <person name="Tsukumo S."/>
            <person name="Yonehara S."/>
        </authorList>
    </citation>
    <scope>NUCLEOTIDE SEQUENCE [GENOMIC DNA / MRNA]</scope>
    <scope>FUNCTION</scope>
    <scope>TISSUE SPECIFICITY</scope>
    <scope>DEVELOPMENTAL STAGE</scope>
    <source>
        <strain>129/SvJ</strain>
    </source>
</reference>
<reference key="2">
    <citation type="journal article" date="1998" name="J. Mol. Biol.">
        <title>Molecular cloning and identification of murine caspase-8.</title>
        <authorList>
            <person name="Van de Craen M."/>
            <person name="Van Loo G."/>
            <person name="Declercq W."/>
            <person name="Schotte P."/>
            <person name="van den Brande I."/>
            <person name="Mandruzzato S."/>
            <person name="van der Bruggen P."/>
            <person name="Fiers W."/>
            <person name="Vandenabeele P."/>
        </authorList>
    </citation>
    <scope>NUCLEOTIDE SEQUENCE [MRNA]</scope>
    <scope>FUNCTION</scope>
    <scope>CATALYTIC ACTIVITY</scope>
    <scope>TISSUE SPECIFICITY</scope>
    <scope>DEVELOPMENTAL STAGE</scope>
    <scope>ACTIVITY REGULATION</scope>
</reference>
<reference key="3">
    <citation type="journal article" date="2004" name="Genome Res.">
        <title>The status, quality, and expansion of the NIH full-length cDNA project: the Mammalian Gene Collection (MGC).</title>
        <authorList>
            <consortium name="The MGC Project Team"/>
        </authorList>
    </citation>
    <scope>NUCLEOTIDE SEQUENCE [LARGE SCALE MRNA]</scope>
    <source>
        <strain>FVB/N</strain>
        <tissue>Colon</tissue>
        <tissue>Mammary gland</tissue>
    </source>
</reference>
<reference key="4">
    <citation type="submission" date="1997-07" db="EMBL/GenBank/DDBJ databases">
        <authorList>
            <person name="Kioschis P."/>
            <person name="Kischkel F."/>
            <person name="Poustka A."/>
            <person name="Krammer P."/>
        </authorList>
    </citation>
    <scope>NUCLEOTIDE SEQUENCE [MRNA] OF 57-476</scope>
</reference>
<reference key="5">
    <citation type="journal article" date="1998" name="Immunity">
        <title>Targeted disruption of the mouse Caspase 8 gene ablates cell death induction by the TNF receptors, Fas/Apo1, and DR3 and is lethal prenatally.</title>
        <authorList>
            <person name="Varfolomeev E.E."/>
            <person name="Schuchmann M."/>
            <person name="Luria V."/>
            <person name="Chiannilkulchai N."/>
            <person name="Beckmann J.S."/>
            <person name="Mett I.L."/>
            <person name="Rebrikov D."/>
            <person name="Brodianski V.M."/>
            <person name="Kemper O.C."/>
            <person name="Kollet O."/>
            <person name="Lapidot T."/>
            <person name="Soffer D."/>
            <person name="Sobe T."/>
            <person name="Avraham K.B."/>
            <person name="Goncharov T."/>
            <person name="Holtmann H."/>
            <person name="Lonai P."/>
            <person name="Wallach D."/>
        </authorList>
    </citation>
    <scope>DISRUPTION PHENOTYPE</scope>
</reference>
<reference key="6">
    <citation type="journal article" date="2002" name="J. Biol. Chem.">
        <title>Active caspase-8 translocates into the nucleus of apoptotic cells to inactivate poly(ADP-ribose) polymerase-2.</title>
        <authorList>
            <person name="Benchoua A."/>
            <person name="Couriaud C."/>
            <person name="Guegan C."/>
            <person name="Tartier L."/>
            <person name="Couvert P."/>
            <person name="Friocourt G."/>
            <person name="Chelly J."/>
            <person name="Menissier-de Murcia J."/>
            <person name="Onteniente B."/>
        </authorList>
    </citation>
    <scope>FUNCTION</scope>
    <scope>CATALYTIC ACTIVITY</scope>
    <scope>SUBCELLULAR LOCATION</scope>
</reference>
<reference key="7">
    <citation type="journal article" date="2004" name="Mol. Cell">
        <title>Inhibition of both the extrinsic and intrinsic death pathways through nonhomotypic death-fold interactions.</title>
        <authorList>
            <person name="Nam Y.J."/>
            <person name="Mani K."/>
            <person name="Ashton A.W."/>
            <person name="Peng C.F."/>
            <person name="Krishnamurthy B."/>
            <person name="Hayakawa Y."/>
            <person name="Lee P."/>
            <person name="Korsmeyer S.J."/>
            <person name="Kitsis R.N."/>
        </authorList>
    </citation>
    <scope>INTERACTION WITH NOL3</scope>
</reference>
<reference key="8">
    <citation type="journal article" date="2007" name="EMBO J.">
        <title>FLASH links the CD95 signaling pathway to the cell nucleus and nuclear bodies.</title>
        <authorList>
            <person name="Milovic-Holm K."/>
            <person name="Krieghoff E."/>
            <person name="Jensen K."/>
            <person name="Will H."/>
            <person name="Hofmann T.G."/>
        </authorList>
    </citation>
    <scope>INTERACTION WITH CASP8AP2</scope>
</reference>
<reference key="9">
    <citation type="journal article" date="2007" name="Proc. Natl. Acad. Sci. U.S.A.">
        <title>Large-scale phosphorylation analysis of mouse liver.</title>
        <authorList>
            <person name="Villen J."/>
            <person name="Beausoleil S.A."/>
            <person name="Gerber S.A."/>
            <person name="Gygi S.P."/>
        </authorList>
    </citation>
    <scope>PHOSPHORYLATION [LARGE SCALE ANALYSIS] AT SER-188 AND SER-213</scope>
    <scope>IDENTIFICATION BY MASS SPECTROMETRY [LARGE SCALE ANALYSIS]</scope>
    <source>
        <tissue>Liver</tissue>
    </source>
</reference>
<reference key="10">
    <citation type="journal article" date="2008" name="Cell">
        <title>TIPE2, a negative regulator of innate and adaptive immunity that maintains immune homeostasis.</title>
        <authorList>
            <person name="Sun H."/>
            <person name="Gong S."/>
            <person name="Carmody R.J."/>
            <person name="Hilliard A."/>
            <person name="Li L."/>
            <person name="Sun J."/>
            <person name="Kong L."/>
            <person name="Xu L."/>
            <person name="Hilliard B."/>
            <person name="Hu S."/>
            <person name="Shen H."/>
            <person name="Yang X."/>
            <person name="Chen Y.H."/>
        </authorList>
    </citation>
    <scope>INTERACTION WITH TNFAIP8L2</scope>
</reference>
<reference key="11">
    <citation type="journal article" date="2009" name="Mol. Cell. Proteomics">
        <title>Large scale localization of protein phosphorylation by use of electron capture dissociation mass spectrometry.</title>
        <authorList>
            <person name="Sweet S.M."/>
            <person name="Bailey C.M."/>
            <person name="Cunningham D.L."/>
            <person name="Heath J.K."/>
            <person name="Cooper H.J."/>
        </authorList>
    </citation>
    <scope>PHOSPHORYLATION [LARGE SCALE ANALYSIS] AT SER-188</scope>
    <scope>IDENTIFICATION BY MASS SPECTROMETRY [LARGE SCALE ANALYSIS]</scope>
    <source>
        <tissue>Embryonic fibroblast</tissue>
    </source>
</reference>
<reference key="12">
    <citation type="journal article" date="2010" name="Cell">
        <title>A tissue-specific atlas of mouse protein phosphorylation and expression.</title>
        <authorList>
            <person name="Huttlin E.L."/>
            <person name="Jedrychowski M.P."/>
            <person name="Elias J.E."/>
            <person name="Goswami T."/>
            <person name="Rad R."/>
            <person name="Beausoleil S.A."/>
            <person name="Villen J."/>
            <person name="Haas W."/>
            <person name="Sowa M.E."/>
            <person name="Gygi S.P."/>
        </authorList>
    </citation>
    <scope>PHOSPHORYLATION [LARGE SCALE ANALYSIS] AT SER-188 AND SER-213</scope>
    <scope>IDENTIFICATION BY MASS SPECTROMETRY [LARGE SCALE ANALYSIS]</scope>
    <source>
        <tissue>Brown adipose tissue</tissue>
        <tissue>Kidney</tissue>
        <tissue>Liver</tissue>
        <tissue>Lung</tissue>
        <tissue>Pancreas</tissue>
        <tissue>Spleen</tissue>
    </source>
</reference>
<reference key="13">
    <citation type="journal article" date="2013" name="Mol. Cell">
        <title>SIRT5-mediated lysine desuccinylation impacts diverse metabolic pathways.</title>
        <authorList>
            <person name="Park J."/>
            <person name="Chen Y."/>
            <person name="Tishkoff D.X."/>
            <person name="Peng C."/>
            <person name="Tan M."/>
            <person name="Dai L."/>
            <person name="Xie Z."/>
            <person name="Zhang Y."/>
            <person name="Zwaans B.M."/>
            <person name="Skinner M.E."/>
            <person name="Lombard D.B."/>
            <person name="Zhao Y."/>
        </authorList>
    </citation>
    <scope>ACETYLATION [LARGE SCALE ANALYSIS] AT LYS-226</scope>
    <scope>IDENTIFICATION BY MASS SPECTROMETRY [LARGE SCALE ANALYSIS]</scope>
    <source>
        <tissue>Embryonic fibroblast</tissue>
    </source>
</reference>
<reference key="14">
    <citation type="journal article" date="2014" name="Cell">
        <title>RIPK1 regulates RIPK3-MLKL-driven systemic inflammation and emergency hematopoiesis.</title>
        <authorList>
            <person name="Rickard J.A."/>
            <person name="O'Donnell J.A."/>
            <person name="Evans J.M."/>
            <person name="Lalaoui N."/>
            <person name="Poh A.R."/>
            <person name="Rogers T."/>
            <person name="Vince J.E."/>
            <person name="Lawlor K.E."/>
            <person name="Ninnis R.L."/>
            <person name="Anderton H."/>
            <person name="Hall C."/>
            <person name="Spall S.K."/>
            <person name="Phesse T.J."/>
            <person name="Abud H.E."/>
            <person name="Cengia L.H."/>
            <person name="Corbin J."/>
            <person name="Mifsud S."/>
            <person name="Di Rago L."/>
            <person name="Metcalf D."/>
            <person name="Ernst M."/>
            <person name="Dewson G."/>
            <person name="Roberts A.W."/>
            <person name="Alexander W.S."/>
            <person name="Murphy J.M."/>
            <person name="Ekert P.G."/>
            <person name="Masters S.L."/>
            <person name="Vaux D.L."/>
            <person name="Croker B.A."/>
            <person name="Gerlic M."/>
            <person name="Silke J."/>
        </authorList>
    </citation>
    <scope>FUNCTION</scope>
    <scope>DISRUPTION PHENOTYPE</scope>
</reference>
<reference key="15">
    <citation type="journal article" date="2014" name="Cell">
        <title>RIPK1 blocks early postnatal lethality mediated by caspase-8 and RIPK3.</title>
        <authorList>
            <person name="Dillon C.P."/>
            <person name="Weinlich R."/>
            <person name="Rodriguez D.A."/>
            <person name="Cripps J.G."/>
            <person name="Quarato G."/>
            <person name="Gurung P."/>
            <person name="Verbist K.C."/>
            <person name="Brewer T.L."/>
            <person name="Llambi F."/>
            <person name="Gong Y.N."/>
            <person name="Janke L.J."/>
            <person name="Kelliher M.A."/>
            <person name="Kanneganti T.D."/>
            <person name="Green D.R."/>
        </authorList>
    </citation>
    <scope>FUNCTION</scope>
    <scope>DISRUPTION PHENOTYPE</scope>
</reference>
<reference key="16">
    <citation type="journal article" date="2018" name="Proc. Natl. Acad. Sci. U.S.A.">
        <title>Death-domain dimerization-mediated activation of RIPK1 controls necroptosis and RIPK1-dependent apoptosis.</title>
        <authorList>
            <person name="Meng H."/>
            <person name="Liu Z."/>
            <person name="Li X."/>
            <person name="Wang H."/>
            <person name="Jin T."/>
            <person name="Wu G."/>
            <person name="Shan B."/>
            <person name="Christofferson D.E."/>
            <person name="Qi C."/>
            <person name="Yu Q."/>
            <person name="Li Y."/>
            <person name="Yuan J."/>
        </authorList>
    </citation>
    <scope>FUNCTION</scope>
    <scope>INTERACTION WITH FADD</scope>
</reference>
<reference key="17">
    <citation type="journal article" date="2019" name="Nat. Commun.">
        <title>K63-linked ubiquitination regulates RIPK1 kinase activity to prevent cell death during embryogenesis and inflammation.</title>
        <authorList>
            <person name="Tang Y."/>
            <person name="Tu H."/>
            <person name="Zhang J."/>
            <person name="Zhao X."/>
            <person name="Wang Y."/>
            <person name="Qin J."/>
            <person name="Lin X."/>
        </authorList>
    </citation>
    <scope>INTERACTION WITH RIPK1</scope>
</reference>
<reference key="18">
    <citation type="journal article" date="2018" name="Proc. Natl. Acad. Sci. U.S.A.">
        <title>Caspase-8 induces cleavage of gasdermin D to elicit pyroptosis during Yersinia infection.</title>
        <authorList>
            <person name="Sarhan J."/>
            <person name="Liu B.C."/>
            <person name="Muendlein H.I."/>
            <person name="Li P."/>
            <person name="Nilson R."/>
            <person name="Tang A.Y."/>
            <person name="Rongvaux A."/>
            <person name="Bunnell S.C."/>
            <person name="Shao F."/>
            <person name="Green D.R."/>
            <person name="Poltorak A."/>
        </authorList>
    </citation>
    <scope>FUNCTION</scope>
</reference>
<reference key="19">
    <citation type="journal article" date="2018" name="Science">
        <title>Pathogen blockade of TAK1 triggers caspase-8-dependent cleavage of gasdermin D and cell death.</title>
        <authorList>
            <person name="Orning P."/>
            <person name="Weng D."/>
            <person name="Starheim K."/>
            <person name="Ratner D."/>
            <person name="Best Z."/>
            <person name="Lee B."/>
            <person name="Brooks A."/>
            <person name="Xia S."/>
            <person name="Wu H."/>
            <person name="Kelliher M.A."/>
            <person name="Berger S.B."/>
            <person name="Gough P.J."/>
            <person name="Bertin J."/>
            <person name="Proulx M.M."/>
            <person name="Goguen J.D."/>
            <person name="Kayagaki N."/>
            <person name="Fitzgerald K.A."/>
            <person name="Lien E."/>
        </authorList>
    </citation>
    <scope>FUNCTION</scope>
</reference>
<reference key="20">
    <citation type="journal article" date="2019" name="Nature">
        <title>Cleavage of RIPK1 by caspase-8 is crucial for limiting apoptosis and necroptosis.</title>
        <authorList>
            <person name="Newton K."/>
            <person name="Wickliffe K.E."/>
            <person name="Dugger D.L."/>
            <person name="Maltzman A."/>
            <person name="Roose-Girma M."/>
            <person name="Dohse M."/>
            <person name="Komuves L."/>
            <person name="Webster J.D."/>
            <person name="Dixit V.M."/>
        </authorList>
    </citation>
    <scope>FUNCTION</scope>
    <scope>MUTAGENESIS OF ASP-212; ASP-218; ASP-225; CYS-362 AND ASP-387</scope>
    <scope>PROTEOLYTIC PROCESSING</scope>
    <scope>SITE</scope>
    <scope>ACTIVE SITE</scope>
</reference>
<reference key="21">
    <citation type="journal article" date="2019" name="Nature">
        <title>Caspase-8 is the molecular switch for apoptosis, necroptosis and pyroptosis.</title>
        <authorList>
            <person name="Fritsch M."/>
            <person name="Guenther S.D."/>
            <person name="Schwarzer R."/>
            <person name="Albert M.C."/>
            <person name="Schorn F."/>
            <person name="Werthenbach J.P."/>
            <person name="Schiffmann L.M."/>
            <person name="Stair N."/>
            <person name="Stocks H."/>
            <person name="Seeger J.M."/>
            <person name="Lamkanfi M."/>
            <person name="Kroenke M."/>
            <person name="Pasparakis M."/>
            <person name="Kashkar H."/>
        </authorList>
    </citation>
    <scope>FUNCTION</scope>
    <scope>MUTAGENESIS OF CYS-362</scope>
    <scope>ACTIVE SITE</scope>
</reference>
<reference key="22">
    <citation type="journal article" date="2020" name="Nature">
        <title>Integration of innate immune signaling by caspase-8 cleavage of N4BP1.</title>
        <authorList>
            <person name="Gitlin A.D."/>
            <person name="Heger K."/>
            <person name="Schubert A.F."/>
            <person name="Reja R."/>
            <person name="Yan D."/>
            <person name="Pham V.C."/>
            <person name="Suto E."/>
            <person name="Zhang J."/>
            <person name="Kwon Y.C."/>
            <person name="Freund E.C."/>
            <person name="Kang J."/>
            <person name="Pham A."/>
            <person name="Caothien R."/>
            <person name="Bacarro N."/>
            <person name="Hinkle T."/>
            <person name="Xu M."/>
            <person name="McKenzie B.S."/>
            <person name="Haley B."/>
            <person name="Lee W.P."/>
            <person name="Lill J.R."/>
            <person name="Roose-Girma M."/>
            <person name="Dohse M."/>
            <person name="Webster J.D."/>
            <person name="Newton K."/>
            <person name="Dixit V.M."/>
        </authorList>
    </citation>
    <scope>FUNCTION</scope>
    <scope>CATALYTIC ACTIVITY</scope>
</reference>
<reference key="23">
    <citation type="journal article" date="2021" name="Nature">
        <title>AIM2 forms a complex with pyrin and ZBP1 to drive PANoptosis and host defence.</title>
        <authorList>
            <person name="Lee S."/>
            <person name="Karki R."/>
            <person name="Wang Y."/>
            <person name="Nguyen L.N."/>
            <person name="Kalathur R.C."/>
            <person name="Kanneganti T.D."/>
        </authorList>
    </citation>
    <scope>IDENTIFICATION IN THE AIM2 PANOPTOSOME COMPLEX</scope>
</reference>
<reference key="24">
    <citation type="journal article" date="2021" name="Nat. Commun.">
        <title>ZBP1 promotes LPS-induced cell death and IL-1beta release via RHIM-mediated interactions with RIPK1.</title>
        <authorList>
            <person name="Muendlein H.I."/>
            <person name="Connolly W.M."/>
            <person name="Magri Z."/>
            <person name="Smirnova I."/>
            <person name="Ilyukha V."/>
            <person name="Gautam A."/>
            <person name="Degterev A."/>
            <person name="Poltorak A."/>
        </authorList>
    </citation>
    <scope>FUNCTION</scope>
</reference>
<accession>O89110</accession>
<accession>O35669</accession>